<feature type="chain" id="PRO_0000410757" description="Topoisomerase I damage affected protein 11">
    <location>
        <begin position="1"/>
        <end position="442"/>
    </location>
</feature>
<feature type="region of interest" description="Disordered" evidence="3">
    <location>
        <begin position="16"/>
        <end position="138"/>
    </location>
</feature>
<feature type="region of interest" description="Disordered" evidence="3">
    <location>
        <begin position="151"/>
        <end position="194"/>
    </location>
</feature>
<feature type="region of interest" description="Disordered" evidence="3">
    <location>
        <begin position="298"/>
        <end position="328"/>
    </location>
</feature>
<feature type="region of interest" description="Disordered" evidence="3">
    <location>
        <begin position="354"/>
        <end position="379"/>
    </location>
</feature>
<feature type="coiled-coil region" evidence="2">
    <location>
        <begin position="270"/>
        <end position="300"/>
    </location>
</feature>
<feature type="compositionally biased region" description="Basic and acidic residues" evidence="3">
    <location>
        <begin position="16"/>
        <end position="31"/>
    </location>
</feature>
<feature type="compositionally biased region" description="Low complexity" evidence="3">
    <location>
        <begin position="42"/>
        <end position="55"/>
    </location>
</feature>
<feature type="compositionally biased region" description="Polar residues" evidence="3">
    <location>
        <begin position="56"/>
        <end position="76"/>
    </location>
</feature>
<feature type="compositionally biased region" description="Polar residues" evidence="3">
    <location>
        <begin position="110"/>
        <end position="121"/>
    </location>
</feature>
<feature type="compositionally biased region" description="Polar residues" evidence="3">
    <location>
        <begin position="155"/>
        <end position="176"/>
    </location>
</feature>
<feature type="compositionally biased region" description="Basic and acidic residues" evidence="3">
    <location>
        <begin position="183"/>
        <end position="192"/>
    </location>
</feature>
<accession>Q6CN40</accession>
<proteinExistence type="inferred from homology"/>
<dbReference type="EMBL" id="CR382125">
    <property type="protein sequence ID" value="CAG99736.1"/>
    <property type="molecule type" value="Genomic_DNA"/>
</dbReference>
<dbReference type="RefSeq" id="XP_454649.1">
    <property type="nucleotide sequence ID" value="XM_454649.1"/>
</dbReference>
<dbReference type="SMR" id="Q6CN40"/>
<dbReference type="FunCoup" id="Q6CN40">
    <property type="interactions" value="18"/>
</dbReference>
<dbReference type="PaxDb" id="284590-Q6CN40"/>
<dbReference type="KEGG" id="kla:KLLA0_E15489g"/>
<dbReference type="HOGENOM" id="CLU_619735_0_0_1"/>
<dbReference type="InParanoid" id="Q6CN40"/>
<dbReference type="Proteomes" id="UP000000598">
    <property type="component" value="Chromosome E"/>
</dbReference>
<dbReference type="GO" id="GO:0005737">
    <property type="term" value="C:cytoplasm"/>
    <property type="evidence" value="ECO:0007669"/>
    <property type="project" value="UniProtKB-SubCell"/>
</dbReference>
<dbReference type="InterPro" id="IPR031388">
    <property type="entry name" value="Tda11"/>
</dbReference>
<dbReference type="Pfam" id="PF17084">
    <property type="entry name" value="TDA11"/>
    <property type="match status" value="1"/>
</dbReference>
<organism>
    <name type="scientific">Kluyveromyces lactis (strain ATCC 8585 / CBS 2359 / DSM 70799 / NBRC 1267 / NRRL Y-1140 / WM37)</name>
    <name type="common">Yeast</name>
    <name type="synonym">Candida sphaerica</name>
    <dbReference type="NCBI Taxonomy" id="284590"/>
    <lineage>
        <taxon>Eukaryota</taxon>
        <taxon>Fungi</taxon>
        <taxon>Dikarya</taxon>
        <taxon>Ascomycota</taxon>
        <taxon>Saccharomycotina</taxon>
        <taxon>Saccharomycetes</taxon>
        <taxon>Saccharomycetales</taxon>
        <taxon>Saccharomycetaceae</taxon>
        <taxon>Kluyveromyces</taxon>
    </lineage>
</organism>
<gene>
    <name type="primary">TDA11</name>
    <name type="ordered locus">KLLA0E15489g</name>
</gene>
<comment type="subcellular location">
    <subcellularLocation>
        <location evidence="1">Cytoplasm</location>
    </subcellularLocation>
</comment>
<comment type="similarity">
    <text evidence="4">Belongs to the TDA11 family.</text>
</comment>
<protein>
    <recommendedName>
        <fullName>Topoisomerase I damage affected protein 11</fullName>
    </recommendedName>
</protein>
<name>TDA11_KLULA</name>
<evidence type="ECO:0000250" key="1"/>
<evidence type="ECO:0000255" key="2"/>
<evidence type="ECO:0000256" key="3">
    <source>
        <dbReference type="SAM" id="MobiDB-lite"/>
    </source>
</evidence>
<evidence type="ECO:0000305" key="4"/>
<reference key="1">
    <citation type="journal article" date="2004" name="Nature">
        <title>Genome evolution in yeasts.</title>
        <authorList>
            <person name="Dujon B."/>
            <person name="Sherman D."/>
            <person name="Fischer G."/>
            <person name="Durrens P."/>
            <person name="Casaregola S."/>
            <person name="Lafontaine I."/>
            <person name="de Montigny J."/>
            <person name="Marck C."/>
            <person name="Neuveglise C."/>
            <person name="Talla E."/>
            <person name="Goffard N."/>
            <person name="Frangeul L."/>
            <person name="Aigle M."/>
            <person name="Anthouard V."/>
            <person name="Babour A."/>
            <person name="Barbe V."/>
            <person name="Barnay S."/>
            <person name="Blanchin S."/>
            <person name="Beckerich J.-M."/>
            <person name="Beyne E."/>
            <person name="Bleykasten C."/>
            <person name="Boisrame A."/>
            <person name="Boyer J."/>
            <person name="Cattolico L."/>
            <person name="Confanioleri F."/>
            <person name="de Daruvar A."/>
            <person name="Despons L."/>
            <person name="Fabre E."/>
            <person name="Fairhead C."/>
            <person name="Ferry-Dumazet H."/>
            <person name="Groppi A."/>
            <person name="Hantraye F."/>
            <person name="Hennequin C."/>
            <person name="Jauniaux N."/>
            <person name="Joyet P."/>
            <person name="Kachouri R."/>
            <person name="Kerrest A."/>
            <person name="Koszul R."/>
            <person name="Lemaire M."/>
            <person name="Lesur I."/>
            <person name="Ma L."/>
            <person name="Muller H."/>
            <person name="Nicaud J.-M."/>
            <person name="Nikolski M."/>
            <person name="Oztas S."/>
            <person name="Ozier-Kalogeropoulos O."/>
            <person name="Pellenz S."/>
            <person name="Potier S."/>
            <person name="Richard G.-F."/>
            <person name="Straub M.-L."/>
            <person name="Suleau A."/>
            <person name="Swennen D."/>
            <person name="Tekaia F."/>
            <person name="Wesolowski-Louvel M."/>
            <person name="Westhof E."/>
            <person name="Wirth B."/>
            <person name="Zeniou-Meyer M."/>
            <person name="Zivanovic Y."/>
            <person name="Bolotin-Fukuhara M."/>
            <person name="Thierry A."/>
            <person name="Bouchier C."/>
            <person name="Caudron B."/>
            <person name="Scarpelli C."/>
            <person name="Gaillardin C."/>
            <person name="Weissenbach J."/>
            <person name="Wincker P."/>
            <person name="Souciet J.-L."/>
        </authorList>
    </citation>
    <scope>NUCLEOTIDE SEQUENCE [LARGE SCALE GENOMIC DNA]</scope>
    <source>
        <strain>ATCC 8585 / CBS 2359 / DSM 70799 / NBRC 1267 / NRRL Y-1140 / WM37</strain>
    </source>
</reference>
<sequence>MDRDVLEKFIDLQDKENDIDTKSKIYHEVTDRGSVTPTFNQGSSGMSPKSVGSSGRNKNIQLQLTPTKADPTSTLDSHPLKGDNSDQDDITGNMKENEDDVSLGSGKVTVKNNGNGVSAATNGKGGNQELGIRRSNTWKRKSLIMPLMSPEHTVKQQQRQSYQQHCKPSESVSNTPLGRKYRSKLDRNDGQKSVRSSISSIGSLLPDGATTEFSASPATKLKLPTTTTDTAKVVPSVSEDDNDMESLLQSLANKELEILERTRRVHDLFRQIKIEDKIIKQNAEELQQLKKKVSRLVGNQVQGQNSNTTLPAESHGESNNAETADNKSSSLWTKSVSLLNQFDQIIQGTVETKLGLGDSGSSATENQSEGKPKGDDNAGSAIWSLVNEFKNGLGLLATEEEDADGSIGTIATGLATNMEDYGTRKAESSTQAKEIEMYHYSH</sequence>
<keyword id="KW-0175">Coiled coil</keyword>
<keyword id="KW-0963">Cytoplasm</keyword>
<keyword id="KW-1185">Reference proteome</keyword>